<feature type="chain" id="PRO_0000415468" description="Hypoxanthine/guanine phosphoribosyltransferase">
    <location>
        <begin position="1"/>
        <end position="196"/>
    </location>
</feature>
<keyword id="KW-0963">Cytoplasm</keyword>
<keyword id="KW-0328">Glycosyltransferase</keyword>
<keyword id="KW-0660">Purine salvage</keyword>
<keyword id="KW-0808">Transferase</keyword>
<reference key="1">
    <citation type="submission" date="2010-02" db="EMBL/GenBank/DDBJ databases">
        <title>Complete sequence of chromosome of Methanocaldococcus sp. FS406-22.</title>
        <authorList>
            <consortium name="US DOE Joint Genome Institute"/>
            <person name="Lucas S."/>
            <person name="Copeland A."/>
            <person name="Lapidus A."/>
            <person name="Cheng J.-F."/>
            <person name="Bruce D."/>
            <person name="Goodwin L."/>
            <person name="Pitluck S."/>
            <person name="Teshima H."/>
            <person name="Detter J.C."/>
            <person name="Han C."/>
            <person name="Tapia R."/>
            <person name="Larimer F."/>
            <person name="Land M."/>
            <person name="Hauser L."/>
            <person name="Kyrpides N."/>
            <person name="Mikhailova N."/>
            <person name="Sieprawska-Lupa M."/>
            <person name="Leigh J."/>
            <person name="Whitman W.B."/>
            <person name="Woyke T."/>
        </authorList>
    </citation>
    <scope>NUCLEOTIDE SEQUENCE [LARGE SCALE GENOMIC DNA]</scope>
    <source>
        <strain>FS406-22</strain>
    </source>
</reference>
<proteinExistence type="inferred from homology"/>
<evidence type="ECO:0000255" key="1">
    <source>
        <dbReference type="HAMAP-Rule" id="MF_01467"/>
    </source>
</evidence>
<organism>
    <name type="scientific">Methanocaldococcus sp. (strain FS406-22)</name>
    <dbReference type="NCBI Taxonomy" id="644281"/>
    <lineage>
        <taxon>Archaea</taxon>
        <taxon>Methanobacteriati</taxon>
        <taxon>Methanobacteriota</taxon>
        <taxon>Methanomada group</taxon>
        <taxon>Methanococci</taxon>
        <taxon>Methanococcales</taxon>
        <taxon>Methanocaldococcaceae</taxon>
        <taxon>Methanocaldococcus</taxon>
    </lineage>
</organism>
<accession>D3S8C7</accession>
<sequence>MFIKCYSGGGRLLLEETLKSCPIVKRGQYHYFIHPISDGVPLVEPKLLREVAMRIIKIGNFEDVDKLVTAEAMGIPLVTTLSLYTDIPYVIMRKREYKLPGEIPVFQSTGYSKGQLYLNGIEKGDKVVIIDDVISTGGTMIAIINALKRAGAEIKDIICVIERGEGKKIVEEKTGYKIKTLVKIDVVDGKVVILRD</sequence>
<comment type="function">
    <text evidence="1">Catalyzes a salvage reaction resulting in the formation of IMP that is energically less costly than de novo synthesis.</text>
</comment>
<comment type="catalytic activity">
    <reaction evidence="1">
        <text>IMP + diphosphate = hypoxanthine + 5-phospho-alpha-D-ribose 1-diphosphate</text>
        <dbReference type="Rhea" id="RHEA:17973"/>
        <dbReference type="ChEBI" id="CHEBI:17368"/>
        <dbReference type="ChEBI" id="CHEBI:33019"/>
        <dbReference type="ChEBI" id="CHEBI:58017"/>
        <dbReference type="ChEBI" id="CHEBI:58053"/>
        <dbReference type="EC" id="2.4.2.8"/>
    </reaction>
</comment>
<comment type="catalytic activity">
    <reaction evidence="1">
        <text>GMP + diphosphate = guanine + 5-phospho-alpha-D-ribose 1-diphosphate</text>
        <dbReference type="Rhea" id="RHEA:25424"/>
        <dbReference type="ChEBI" id="CHEBI:16235"/>
        <dbReference type="ChEBI" id="CHEBI:33019"/>
        <dbReference type="ChEBI" id="CHEBI:58017"/>
        <dbReference type="ChEBI" id="CHEBI:58115"/>
        <dbReference type="EC" id="2.4.2.8"/>
    </reaction>
</comment>
<comment type="pathway">
    <text evidence="1">Purine metabolism; IMP biosynthesis via salvage pathway; IMP from hypoxanthine: step 1/1.</text>
</comment>
<comment type="subunit">
    <text evidence="1">Homodimer.</text>
</comment>
<comment type="subcellular location">
    <subcellularLocation>
        <location evidence="1">Cytoplasm</location>
    </subcellularLocation>
</comment>
<comment type="similarity">
    <text evidence="1">Belongs to the purine/pyrimidine phosphoribosyltransferase family. Archaeal HPRT subfamily.</text>
</comment>
<dbReference type="EC" id="2.4.2.8" evidence="1"/>
<dbReference type="EMBL" id="CP001901">
    <property type="protein sequence ID" value="ADC69287.1"/>
    <property type="molecule type" value="Genomic_DNA"/>
</dbReference>
<dbReference type="SMR" id="D3S8C7"/>
<dbReference type="STRING" id="644281.MFS40622_0597"/>
<dbReference type="KEGG" id="mfs:MFS40622_0597"/>
<dbReference type="eggNOG" id="arCOG00030">
    <property type="taxonomic scope" value="Archaea"/>
</dbReference>
<dbReference type="HOGENOM" id="CLU_126376_0_0_2"/>
<dbReference type="UniPathway" id="UPA00591">
    <property type="reaction ID" value="UER00648"/>
</dbReference>
<dbReference type="Proteomes" id="UP000002189">
    <property type="component" value="Chromosome"/>
</dbReference>
<dbReference type="GO" id="GO:0005737">
    <property type="term" value="C:cytoplasm"/>
    <property type="evidence" value="ECO:0007669"/>
    <property type="project" value="UniProtKB-SubCell"/>
</dbReference>
<dbReference type="GO" id="GO:0052657">
    <property type="term" value="F:guanine phosphoribosyltransferase activity"/>
    <property type="evidence" value="ECO:0007669"/>
    <property type="project" value="RHEA"/>
</dbReference>
<dbReference type="GO" id="GO:0004422">
    <property type="term" value="F:hypoxanthine phosphoribosyltransferase activity"/>
    <property type="evidence" value="ECO:0007669"/>
    <property type="project" value="UniProtKB-UniRule"/>
</dbReference>
<dbReference type="GO" id="GO:0032264">
    <property type="term" value="P:IMP salvage"/>
    <property type="evidence" value="ECO:0007669"/>
    <property type="project" value="UniProtKB-UniRule"/>
</dbReference>
<dbReference type="GO" id="GO:0006166">
    <property type="term" value="P:purine ribonucleoside salvage"/>
    <property type="evidence" value="ECO:0007669"/>
    <property type="project" value="UniProtKB-KW"/>
</dbReference>
<dbReference type="CDD" id="cd06223">
    <property type="entry name" value="PRTases_typeI"/>
    <property type="match status" value="1"/>
</dbReference>
<dbReference type="Gene3D" id="3.40.50.2020">
    <property type="match status" value="1"/>
</dbReference>
<dbReference type="HAMAP" id="MF_01467">
    <property type="entry name" value="Hypx_phosphoribosyltr"/>
    <property type="match status" value="1"/>
</dbReference>
<dbReference type="InterPro" id="IPR026597">
    <property type="entry name" value="HGPRTase-like"/>
</dbReference>
<dbReference type="InterPro" id="IPR000836">
    <property type="entry name" value="PRibTrfase_dom"/>
</dbReference>
<dbReference type="InterPro" id="IPR029057">
    <property type="entry name" value="PRTase-like"/>
</dbReference>
<dbReference type="InterPro" id="IPR050118">
    <property type="entry name" value="Pur/Pyrimidine_PRTase"/>
</dbReference>
<dbReference type="NCBIfam" id="NF040646">
    <property type="entry name" value="HPT_Archaea"/>
    <property type="match status" value="1"/>
</dbReference>
<dbReference type="NCBIfam" id="NF002635">
    <property type="entry name" value="PRK02304.1-4"/>
    <property type="match status" value="1"/>
</dbReference>
<dbReference type="PANTHER" id="PTHR43864">
    <property type="entry name" value="HYPOXANTHINE/GUANINE PHOSPHORIBOSYLTRANSFERASE"/>
    <property type="match status" value="1"/>
</dbReference>
<dbReference type="PANTHER" id="PTHR43864:SF1">
    <property type="entry name" value="XANTHINE PHOSPHORIBOSYLTRANSFERASE"/>
    <property type="match status" value="1"/>
</dbReference>
<dbReference type="Pfam" id="PF00156">
    <property type="entry name" value="Pribosyltran"/>
    <property type="match status" value="1"/>
</dbReference>
<dbReference type="SUPFAM" id="SSF53271">
    <property type="entry name" value="PRTase-like"/>
    <property type="match status" value="1"/>
</dbReference>
<dbReference type="PROSITE" id="PS00103">
    <property type="entry name" value="PUR_PYR_PR_TRANSFER"/>
    <property type="match status" value="1"/>
</dbReference>
<name>HPRT_METSF</name>
<gene>
    <name evidence="1" type="primary">hpt</name>
    <name type="ordered locus">MFS40622_0597</name>
</gene>
<protein>
    <recommendedName>
        <fullName evidence="1">Hypoxanthine/guanine phosphoribosyltransferase</fullName>
        <shortName evidence="1">HGPRTase</shortName>
        <ecNumber evidence="1">2.4.2.8</ecNumber>
    </recommendedName>
</protein>